<reference key="1">
    <citation type="submission" date="2008-12" db="EMBL/GenBank/DDBJ databases">
        <title>Complete sequence of chromosome of Methylobacterium chloromethanicum CM4.</title>
        <authorList>
            <consortium name="US DOE Joint Genome Institute"/>
            <person name="Lucas S."/>
            <person name="Copeland A."/>
            <person name="Lapidus A."/>
            <person name="Glavina del Rio T."/>
            <person name="Dalin E."/>
            <person name="Tice H."/>
            <person name="Bruce D."/>
            <person name="Goodwin L."/>
            <person name="Pitluck S."/>
            <person name="Chertkov O."/>
            <person name="Brettin T."/>
            <person name="Detter J.C."/>
            <person name="Han C."/>
            <person name="Larimer F."/>
            <person name="Land M."/>
            <person name="Hauser L."/>
            <person name="Kyrpides N."/>
            <person name="Mikhailova N."/>
            <person name="Marx C."/>
            <person name="Richardson P."/>
        </authorList>
    </citation>
    <scope>NUCLEOTIDE SEQUENCE [LARGE SCALE GENOMIC DNA]</scope>
    <source>
        <strain>CM4 / NCIMB 13688</strain>
    </source>
</reference>
<keyword id="KW-0031">Aminopeptidase</keyword>
<keyword id="KW-0963">Cytoplasm</keyword>
<keyword id="KW-0378">Hydrolase</keyword>
<keyword id="KW-0464">Manganese</keyword>
<keyword id="KW-0479">Metal-binding</keyword>
<keyword id="KW-0645">Protease</keyword>
<organism>
    <name type="scientific">Methylorubrum extorquens (strain CM4 / NCIMB 13688)</name>
    <name type="common">Methylobacterium extorquens</name>
    <dbReference type="NCBI Taxonomy" id="440085"/>
    <lineage>
        <taxon>Bacteria</taxon>
        <taxon>Pseudomonadati</taxon>
        <taxon>Pseudomonadota</taxon>
        <taxon>Alphaproteobacteria</taxon>
        <taxon>Hyphomicrobiales</taxon>
        <taxon>Methylobacteriaceae</taxon>
        <taxon>Methylorubrum</taxon>
    </lineage>
</organism>
<gene>
    <name evidence="1" type="primary">pepA</name>
    <name type="ordered locus">Mchl_3944</name>
</gene>
<feature type="chain" id="PRO_1000192716" description="Probable cytosol aminopeptidase">
    <location>
        <begin position="1"/>
        <end position="497"/>
    </location>
</feature>
<feature type="active site" evidence="1">
    <location>
        <position position="275"/>
    </location>
</feature>
<feature type="active site" evidence="1">
    <location>
        <position position="349"/>
    </location>
</feature>
<feature type="binding site" evidence="1">
    <location>
        <position position="263"/>
    </location>
    <ligand>
        <name>Mn(2+)</name>
        <dbReference type="ChEBI" id="CHEBI:29035"/>
        <label>2</label>
    </ligand>
</feature>
<feature type="binding site" evidence="1">
    <location>
        <position position="268"/>
    </location>
    <ligand>
        <name>Mn(2+)</name>
        <dbReference type="ChEBI" id="CHEBI:29035"/>
        <label>1</label>
    </ligand>
</feature>
<feature type="binding site" evidence="1">
    <location>
        <position position="268"/>
    </location>
    <ligand>
        <name>Mn(2+)</name>
        <dbReference type="ChEBI" id="CHEBI:29035"/>
        <label>2</label>
    </ligand>
</feature>
<feature type="binding site" evidence="1">
    <location>
        <position position="286"/>
    </location>
    <ligand>
        <name>Mn(2+)</name>
        <dbReference type="ChEBI" id="CHEBI:29035"/>
        <label>2</label>
    </ligand>
</feature>
<feature type="binding site" evidence="1">
    <location>
        <position position="345"/>
    </location>
    <ligand>
        <name>Mn(2+)</name>
        <dbReference type="ChEBI" id="CHEBI:29035"/>
        <label>1</label>
    </ligand>
</feature>
<feature type="binding site" evidence="1">
    <location>
        <position position="347"/>
    </location>
    <ligand>
        <name>Mn(2+)</name>
        <dbReference type="ChEBI" id="CHEBI:29035"/>
        <label>1</label>
    </ligand>
</feature>
<feature type="binding site" evidence="1">
    <location>
        <position position="347"/>
    </location>
    <ligand>
        <name>Mn(2+)</name>
        <dbReference type="ChEBI" id="CHEBI:29035"/>
        <label>2</label>
    </ligand>
</feature>
<protein>
    <recommendedName>
        <fullName evidence="1">Probable cytosol aminopeptidase</fullName>
        <ecNumber evidence="1">3.4.11.1</ecNumber>
    </recommendedName>
    <alternativeName>
        <fullName evidence="1">Leucine aminopeptidase</fullName>
        <shortName evidence="1">LAP</shortName>
        <ecNumber evidence="1">3.4.11.10</ecNumber>
    </alternativeName>
    <alternativeName>
        <fullName evidence="1">Leucyl aminopeptidase</fullName>
    </alternativeName>
</protein>
<accession>B7KYK4</accession>
<proteinExistence type="inferred from homology"/>
<name>AMPA_METC4</name>
<evidence type="ECO:0000255" key="1">
    <source>
        <dbReference type="HAMAP-Rule" id="MF_00181"/>
    </source>
</evidence>
<comment type="function">
    <text evidence="1">Presumably involved in the processing and regular turnover of intracellular proteins. Catalyzes the removal of unsubstituted N-terminal amino acids from various peptides.</text>
</comment>
<comment type="catalytic activity">
    <reaction evidence="1">
        <text>Release of an N-terminal amino acid, Xaa-|-Yaa-, in which Xaa is preferably Leu, but may be other amino acids including Pro although not Arg or Lys, and Yaa may be Pro. Amino acid amides and methyl esters are also readily hydrolyzed, but rates on arylamides are exceedingly low.</text>
        <dbReference type="EC" id="3.4.11.1"/>
    </reaction>
</comment>
<comment type="catalytic activity">
    <reaction evidence="1">
        <text>Release of an N-terminal amino acid, preferentially leucine, but not glutamic or aspartic acids.</text>
        <dbReference type="EC" id="3.4.11.10"/>
    </reaction>
</comment>
<comment type="cofactor">
    <cofactor evidence="1">
        <name>Mn(2+)</name>
        <dbReference type="ChEBI" id="CHEBI:29035"/>
    </cofactor>
    <text evidence="1">Binds 2 manganese ions per subunit.</text>
</comment>
<comment type="subcellular location">
    <subcellularLocation>
        <location evidence="1">Cytoplasm</location>
    </subcellularLocation>
</comment>
<comment type="similarity">
    <text evidence="1">Belongs to the peptidase M17 family.</text>
</comment>
<sequence>MAGGIEITFEPLSSRGTGGDLVVFVGDDLALSGAASEALGQPGTELVARAAASERFKGKAQSALVLPAPAGVEADRLVVIGLGSEKDRAKIDWTVLGGFTAGKVGARSARVVIDGPGFAASARDVADFTLGARLRSYRFDQYKTKKKDEDEAGAALTLRVADPSGAQAAARSAEAVAEGVILARNLVNEPPNVLYPEEYARRVSELTQLGVEVEILDVARMKEIGMGALLAVAQGSAREPRVVIMRWNGADDAAEPPLALIGKGVVFDSGGVSIKSAGGMEDMKGDMGGSAAVVGTLHALASRKAKANVIGAIGIVENMPDGAAYRPSDIVTSLSGQTIEVINTDAEGRLVLADVLWHIQATYKPKAMIDLATLTGAIIVALGQDIAGLFSNDDALSGQITAAGEAAGEKVWRMPLIPAFDKAIDSKFADMKNTGGRHGGAATAAAFLKRYVNDVPWAHLDIAGVGMSSTPSEINRSWGAGWGVRLLDRLVREHYER</sequence>
<dbReference type="EC" id="3.4.11.1" evidence="1"/>
<dbReference type="EC" id="3.4.11.10" evidence="1"/>
<dbReference type="EMBL" id="CP001298">
    <property type="protein sequence ID" value="ACK84755.1"/>
    <property type="molecule type" value="Genomic_DNA"/>
</dbReference>
<dbReference type="RefSeq" id="WP_015951930.1">
    <property type="nucleotide sequence ID" value="NC_011757.1"/>
</dbReference>
<dbReference type="SMR" id="B7KYK4"/>
<dbReference type="KEGG" id="mch:Mchl_3944"/>
<dbReference type="HOGENOM" id="CLU_013734_6_0_5"/>
<dbReference type="Proteomes" id="UP000002385">
    <property type="component" value="Chromosome"/>
</dbReference>
<dbReference type="GO" id="GO:0005737">
    <property type="term" value="C:cytoplasm"/>
    <property type="evidence" value="ECO:0007669"/>
    <property type="project" value="UniProtKB-SubCell"/>
</dbReference>
<dbReference type="GO" id="GO:0030145">
    <property type="term" value="F:manganese ion binding"/>
    <property type="evidence" value="ECO:0007669"/>
    <property type="project" value="UniProtKB-UniRule"/>
</dbReference>
<dbReference type="GO" id="GO:0070006">
    <property type="term" value="F:metalloaminopeptidase activity"/>
    <property type="evidence" value="ECO:0007669"/>
    <property type="project" value="InterPro"/>
</dbReference>
<dbReference type="GO" id="GO:0006508">
    <property type="term" value="P:proteolysis"/>
    <property type="evidence" value="ECO:0007669"/>
    <property type="project" value="UniProtKB-KW"/>
</dbReference>
<dbReference type="CDD" id="cd00433">
    <property type="entry name" value="Peptidase_M17"/>
    <property type="match status" value="1"/>
</dbReference>
<dbReference type="Gene3D" id="3.40.220.10">
    <property type="entry name" value="Leucine Aminopeptidase, subunit E, domain 1"/>
    <property type="match status" value="1"/>
</dbReference>
<dbReference type="Gene3D" id="3.40.630.10">
    <property type="entry name" value="Zn peptidases"/>
    <property type="match status" value="1"/>
</dbReference>
<dbReference type="HAMAP" id="MF_00181">
    <property type="entry name" value="Cytosol_peptidase_M17"/>
    <property type="match status" value="1"/>
</dbReference>
<dbReference type="InterPro" id="IPR011356">
    <property type="entry name" value="Leucine_aapep/pepB"/>
</dbReference>
<dbReference type="InterPro" id="IPR043472">
    <property type="entry name" value="Macro_dom-like"/>
</dbReference>
<dbReference type="InterPro" id="IPR000819">
    <property type="entry name" value="Peptidase_M17_C"/>
</dbReference>
<dbReference type="InterPro" id="IPR023042">
    <property type="entry name" value="Peptidase_M17_leu_NH2_pept"/>
</dbReference>
<dbReference type="InterPro" id="IPR008283">
    <property type="entry name" value="Peptidase_M17_N"/>
</dbReference>
<dbReference type="NCBIfam" id="NF002074">
    <property type="entry name" value="PRK00913.1-4"/>
    <property type="match status" value="1"/>
</dbReference>
<dbReference type="NCBIfam" id="NF002075">
    <property type="entry name" value="PRK00913.2-2"/>
    <property type="match status" value="1"/>
</dbReference>
<dbReference type="NCBIfam" id="NF002077">
    <property type="entry name" value="PRK00913.2-4"/>
    <property type="match status" value="1"/>
</dbReference>
<dbReference type="PANTHER" id="PTHR11963:SF23">
    <property type="entry name" value="CYTOSOL AMINOPEPTIDASE"/>
    <property type="match status" value="1"/>
</dbReference>
<dbReference type="PANTHER" id="PTHR11963">
    <property type="entry name" value="LEUCINE AMINOPEPTIDASE-RELATED"/>
    <property type="match status" value="1"/>
</dbReference>
<dbReference type="Pfam" id="PF00883">
    <property type="entry name" value="Peptidase_M17"/>
    <property type="match status" value="1"/>
</dbReference>
<dbReference type="Pfam" id="PF02789">
    <property type="entry name" value="Peptidase_M17_N"/>
    <property type="match status" value="1"/>
</dbReference>
<dbReference type="PRINTS" id="PR00481">
    <property type="entry name" value="LAMNOPPTDASE"/>
</dbReference>
<dbReference type="SUPFAM" id="SSF52949">
    <property type="entry name" value="Macro domain-like"/>
    <property type="match status" value="1"/>
</dbReference>
<dbReference type="SUPFAM" id="SSF53187">
    <property type="entry name" value="Zn-dependent exopeptidases"/>
    <property type="match status" value="1"/>
</dbReference>
<dbReference type="PROSITE" id="PS00631">
    <property type="entry name" value="CYTOSOL_AP"/>
    <property type="match status" value="1"/>
</dbReference>